<protein>
    <recommendedName>
        <fullName>V-type sodium ATPase subunit C</fullName>
    </recommendedName>
    <alternativeName>
        <fullName>Na(+)-translocating ATPase subunit C</fullName>
    </alternativeName>
    <alternativeName>
        <fullName>V-type sodium pump subunit C</fullName>
    </alternativeName>
</protein>
<comment type="function">
    <text>Involved in ATP-driven sodium extrusion.</text>
</comment>
<comment type="similarity">
    <text evidence="1">Belongs to the V-ATPase V0D/AC39 subunit family.</text>
</comment>
<name>NTPC_ENTHA</name>
<sequence length="328" mass="38163">MEYHELNPLIRGRELELISKDTFEQMIQTDSIDSLGEILQSTIYQPYIYDGFDKDFEANLSQERSKLFQWLKESAPEPEIVWIYTMRYTFHNLKVLTKAEITGQNLDHLYIHDGFYSLEVLKDAIHTQVSVELPDSLMDYIREVHEYCEESTILQGIDVIYDRCFLTEQRRLGEQLGYPELLEEIIAFIDLTNITTTARGILQHRSAGFMTTVISSSGSIPKDTLLSFVRGEMASFTQFLLTTDYSELLKQVIHEEQIDLVSLEQLKDDYLSSFYQVAQTQAFGPLPLLAFLNAKEVESKNLRLLIIGKRNHFSLEQLKERMRQVYDL</sequence>
<feature type="chain" id="PRO_0000119377" description="V-type sodium ATPase subunit C">
    <location>
        <begin position="1"/>
        <end position="328"/>
    </location>
</feature>
<accession>P43456</accession>
<accession>I6SYM8</accession>
<dbReference type="EMBL" id="D17462">
    <property type="protein sequence ID" value="BAA04273.1"/>
    <property type="molecule type" value="Genomic_DNA"/>
</dbReference>
<dbReference type="EMBL" id="X76913">
    <property type="protein sequence ID" value="CAA54239.1"/>
    <property type="molecule type" value="Genomic_DNA"/>
</dbReference>
<dbReference type="EMBL" id="CP003504">
    <property type="protein sequence ID" value="AFM70577.1"/>
    <property type="molecule type" value="Genomic_DNA"/>
</dbReference>
<dbReference type="PIR" id="E54392">
    <property type="entry name" value="E54392"/>
</dbReference>
<dbReference type="RefSeq" id="WP_010738013.1">
    <property type="nucleotide sequence ID" value="NZ_KB946231.1"/>
</dbReference>
<dbReference type="SMR" id="P43456"/>
<dbReference type="TCDB" id="3.A.2.2.2">
    <property type="family name" value="the h+- or na+-translocating f-type, v-type and a-type atpase (f-atpase) superfamily"/>
</dbReference>
<dbReference type="KEGG" id="ehr:EHR_08250"/>
<dbReference type="eggNOG" id="COG1527">
    <property type="taxonomic scope" value="Bacteria"/>
</dbReference>
<dbReference type="HOGENOM" id="CLU_059311_1_0_9"/>
<dbReference type="OrthoDB" id="1653at2"/>
<dbReference type="BioCyc" id="MetaCyc:MONOMER-14148"/>
<dbReference type="Proteomes" id="UP000002895">
    <property type="component" value="Chromosome"/>
</dbReference>
<dbReference type="GO" id="GO:0046961">
    <property type="term" value="F:proton-transporting ATPase activity, rotational mechanism"/>
    <property type="evidence" value="ECO:0007669"/>
    <property type="project" value="InterPro"/>
</dbReference>
<dbReference type="GO" id="GO:0006814">
    <property type="term" value="P:sodium ion transport"/>
    <property type="evidence" value="ECO:0007669"/>
    <property type="project" value="UniProtKB-KW"/>
</dbReference>
<dbReference type="Gene3D" id="1.10.132.50">
    <property type="entry name" value="ATP synthase (C/AC39) subunit, domain 3"/>
    <property type="match status" value="1"/>
</dbReference>
<dbReference type="Gene3D" id="1.20.1690.10">
    <property type="entry name" value="V-type ATP synthase subunit C domain"/>
    <property type="match status" value="2"/>
</dbReference>
<dbReference type="InterPro" id="IPR036079">
    <property type="entry name" value="ATPase_csu/dsu_sf"/>
</dbReference>
<dbReference type="InterPro" id="IPR002843">
    <property type="entry name" value="ATPase_V0-cplx_csu/dsu"/>
</dbReference>
<dbReference type="InterPro" id="IPR050873">
    <property type="entry name" value="V-ATPase_V0D/AC39_subunit"/>
</dbReference>
<dbReference type="InterPro" id="IPR035067">
    <property type="entry name" value="V-type_ATPase_csu/dsu"/>
</dbReference>
<dbReference type="InterPro" id="IPR044911">
    <property type="entry name" value="V-type_ATPase_csu/dsu_dom_3"/>
</dbReference>
<dbReference type="PANTHER" id="PTHR38682">
    <property type="entry name" value="V-TYPE ATP SYNTHASE SUBUNIT C"/>
    <property type="match status" value="1"/>
</dbReference>
<dbReference type="PANTHER" id="PTHR38682:SF1">
    <property type="entry name" value="V-TYPE ATP SYNTHASE SUBUNIT C"/>
    <property type="match status" value="1"/>
</dbReference>
<dbReference type="Pfam" id="PF01992">
    <property type="entry name" value="vATP-synt_AC39"/>
    <property type="match status" value="1"/>
</dbReference>
<dbReference type="SUPFAM" id="SSF103486">
    <property type="entry name" value="V-type ATP synthase subunit C"/>
    <property type="match status" value="1"/>
</dbReference>
<gene>
    <name type="primary">ntpC</name>
    <name type="synonym">ntpP</name>
    <name type="ordered locus">EHR_08250</name>
</gene>
<proteinExistence type="evidence at protein level"/>
<reference key="1">
    <citation type="journal article" date="1994" name="J. Biol. Chem.">
        <title>Sequencing and characterization of the ntp gene cluster for vacuolar-type Na(+)-translocating ATPase of Enterococcus hirae.</title>
        <authorList>
            <person name="Takase K."/>
            <person name="Kakinuma S."/>
            <person name="Yamato I."/>
            <person name="Konishi K."/>
            <person name="Igarashi K."/>
            <person name="Kakinuma Y."/>
        </authorList>
    </citation>
    <scope>NUCLEOTIDE SEQUENCE [GENOMIC DNA]</scope>
    <scope>PROTEIN SEQUENCE OF 1-16</scope>
    <source>
        <strain>ATCC 9790 / DSM 20160 / JCM 8729 / LMG 6399 / NBRC 3181 / NCIMB 6459 / NCDO 1258 / NCTC 12367 / WDCM 00089 / R</strain>
    </source>
</reference>
<reference key="2">
    <citation type="journal article" date="1994" name="J. Biol. Chem.">
        <title>Operon of vacuolar-type Na(+)-ATPase of Enterococcus hirae.</title>
        <authorList>
            <person name="Solioz M."/>
            <person name="Davies K."/>
        </authorList>
    </citation>
    <scope>NUCLEOTIDE SEQUENCE [GENOMIC DNA]</scope>
    <source>
        <strain>ATCC 9790 / DSM 20160 / JCM 8729 / LMG 6399 / NBRC 3181 / NCIMB 6459 / NCDO 1258 / NCTC 12367 / WDCM 00089 / R</strain>
    </source>
</reference>
<reference key="3">
    <citation type="journal article" date="2012" name="J. Bacteriol.">
        <title>Genome sequence of Enterococcus hirae (Streptococcus faecalis) ATCC 9790, a model organism for the study of ion transport, bioenergetics, and copper homeostasis.</title>
        <authorList>
            <person name="Gaechter T."/>
            <person name="Wunderlin C."/>
            <person name="Schmidheini T."/>
            <person name="Solioz M."/>
        </authorList>
    </citation>
    <scope>NUCLEOTIDE SEQUENCE [LARGE SCALE GENOMIC DNA]</scope>
    <source>
        <strain>ATCC 9790 / DSM 20160 / JCM 8729 / LMG 6399 / NBRC 3181 / NCIMB 6459 / NCDO 1258 / NCTC 12367 / WDCM 00089 / R</strain>
    </source>
</reference>
<evidence type="ECO:0000305" key="1"/>
<organism>
    <name type="scientific">Enterococcus hirae (strain ATCC 9790 / DSM 20160 / JCM 8729 / LMG 6399 / NBRC 3181 / NCIMB 6459 / NCDO 1258 / NCTC 12367 / WDCM 00089 / R)</name>
    <dbReference type="NCBI Taxonomy" id="768486"/>
    <lineage>
        <taxon>Bacteria</taxon>
        <taxon>Bacillati</taxon>
        <taxon>Bacillota</taxon>
        <taxon>Bacilli</taxon>
        <taxon>Lactobacillales</taxon>
        <taxon>Enterococcaceae</taxon>
        <taxon>Enterococcus</taxon>
    </lineage>
</organism>
<keyword id="KW-0903">Direct protein sequencing</keyword>
<keyword id="KW-0406">Ion transport</keyword>
<keyword id="KW-0915">Sodium</keyword>
<keyword id="KW-0739">Sodium transport</keyword>
<keyword id="KW-0813">Transport</keyword>